<proteinExistence type="inferred from homology"/>
<name>ZAPA_SALG2</name>
<organism>
    <name type="scientific">Salmonella gallinarum (strain 287/91 / NCTC 13346)</name>
    <dbReference type="NCBI Taxonomy" id="550538"/>
    <lineage>
        <taxon>Bacteria</taxon>
        <taxon>Pseudomonadati</taxon>
        <taxon>Pseudomonadota</taxon>
        <taxon>Gammaproteobacteria</taxon>
        <taxon>Enterobacterales</taxon>
        <taxon>Enterobacteriaceae</taxon>
        <taxon>Salmonella</taxon>
    </lineage>
</organism>
<sequence length="109" mass="12523">MSAQPVDIQIFGRSLRVNCPPDQRDALNQAADDLNQRLQDLKVRTRVTNTEQLVFIAALNISYELTQEKAKTRDYAASMEQRIRMLQQTIEQALLDQGRITEKTGQNFE</sequence>
<dbReference type="EMBL" id="AM933173">
    <property type="protein sequence ID" value="CAR38760.1"/>
    <property type="molecule type" value="Genomic_DNA"/>
</dbReference>
<dbReference type="RefSeq" id="WP_001276011.1">
    <property type="nucleotide sequence ID" value="NC_011274.1"/>
</dbReference>
<dbReference type="SMR" id="B5RE21"/>
<dbReference type="GeneID" id="66757358"/>
<dbReference type="KEGG" id="seg:SG2955"/>
<dbReference type="HOGENOM" id="CLU_116623_3_0_6"/>
<dbReference type="Proteomes" id="UP000008321">
    <property type="component" value="Chromosome"/>
</dbReference>
<dbReference type="GO" id="GO:0032153">
    <property type="term" value="C:cell division site"/>
    <property type="evidence" value="ECO:0007669"/>
    <property type="project" value="TreeGrafter"/>
</dbReference>
<dbReference type="GO" id="GO:0030428">
    <property type="term" value="C:cell septum"/>
    <property type="evidence" value="ECO:0007669"/>
    <property type="project" value="TreeGrafter"/>
</dbReference>
<dbReference type="GO" id="GO:0005829">
    <property type="term" value="C:cytosol"/>
    <property type="evidence" value="ECO:0007669"/>
    <property type="project" value="TreeGrafter"/>
</dbReference>
<dbReference type="GO" id="GO:0005886">
    <property type="term" value="C:plasma membrane"/>
    <property type="evidence" value="ECO:0007669"/>
    <property type="project" value="UniProtKB-UniRule"/>
</dbReference>
<dbReference type="GO" id="GO:0000917">
    <property type="term" value="P:division septum assembly"/>
    <property type="evidence" value="ECO:0007669"/>
    <property type="project" value="UniProtKB-KW"/>
</dbReference>
<dbReference type="GO" id="GO:0043093">
    <property type="term" value="P:FtsZ-dependent cytokinesis"/>
    <property type="evidence" value="ECO:0007669"/>
    <property type="project" value="TreeGrafter"/>
</dbReference>
<dbReference type="GO" id="GO:0000921">
    <property type="term" value="P:septin ring assembly"/>
    <property type="evidence" value="ECO:0007669"/>
    <property type="project" value="TreeGrafter"/>
</dbReference>
<dbReference type="FunFam" id="1.20.5.50:FF:000001">
    <property type="entry name" value="Cell division protein ZapA"/>
    <property type="match status" value="1"/>
</dbReference>
<dbReference type="FunFam" id="3.30.160.880:FF:000001">
    <property type="entry name" value="Cell division protein ZapA"/>
    <property type="match status" value="1"/>
</dbReference>
<dbReference type="Gene3D" id="1.20.5.50">
    <property type="match status" value="1"/>
</dbReference>
<dbReference type="Gene3D" id="3.30.160.880">
    <property type="entry name" value="Cell division protein ZapA protomer, N-terminal domain"/>
    <property type="match status" value="1"/>
</dbReference>
<dbReference type="HAMAP" id="MF_02012">
    <property type="entry name" value="ZapA_type1"/>
    <property type="match status" value="1"/>
</dbReference>
<dbReference type="InterPro" id="IPR007838">
    <property type="entry name" value="Cell_div_ZapA-like"/>
</dbReference>
<dbReference type="InterPro" id="IPR036192">
    <property type="entry name" value="Cell_div_ZapA-like_sf"/>
</dbReference>
<dbReference type="InterPro" id="IPR023771">
    <property type="entry name" value="Cell_div_ZapA_eubact"/>
</dbReference>
<dbReference type="InterPro" id="IPR042233">
    <property type="entry name" value="Cell_div_ZapA_N"/>
</dbReference>
<dbReference type="NCBIfam" id="NF008209">
    <property type="entry name" value="PRK10972.1"/>
    <property type="match status" value="1"/>
</dbReference>
<dbReference type="PANTHER" id="PTHR34981">
    <property type="entry name" value="CELL DIVISION PROTEIN ZAPA"/>
    <property type="match status" value="1"/>
</dbReference>
<dbReference type="PANTHER" id="PTHR34981:SF1">
    <property type="entry name" value="CELL DIVISION PROTEIN ZAPA"/>
    <property type="match status" value="1"/>
</dbReference>
<dbReference type="Pfam" id="PF05164">
    <property type="entry name" value="ZapA"/>
    <property type="match status" value="1"/>
</dbReference>
<dbReference type="SUPFAM" id="SSF102829">
    <property type="entry name" value="Cell division protein ZapA-like"/>
    <property type="match status" value="1"/>
</dbReference>
<keyword id="KW-0131">Cell cycle</keyword>
<keyword id="KW-0132">Cell division</keyword>
<keyword id="KW-0175">Coiled coil</keyword>
<keyword id="KW-0963">Cytoplasm</keyword>
<keyword id="KW-0717">Septation</keyword>
<feature type="chain" id="PRO_1000189520" description="Cell division protein ZapA">
    <location>
        <begin position="1"/>
        <end position="109"/>
    </location>
</feature>
<feature type="coiled-coil region" evidence="1">
    <location>
        <begin position="21"/>
        <end position="97"/>
    </location>
</feature>
<accession>B5RE21</accession>
<protein>
    <recommendedName>
        <fullName evidence="1">Cell division protein ZapA</fullName>
    </recommendedName>
    <alternativeName>
        <fullName evidence="1">Z ring-associated protein ZapA</fullName>
    </alternativeName>
</protein>
<evidence type="ECO:0000255" key="1">
    <source>
        <dbReference type="HAMAP-Rule" id="MF_02012"/>
    </source>
</evidence>
<gene>
    <name evidence="1" type="primary">zapA</name>
    <name type="ordered locus">SG2955</name>
</gene>
<reference key="1">
    <citation type="journal article" date="2008" name="Genome Res.">
        <title>Comparative genome analysis of Salmonella enteritidis PT4 and Salmonella gallinarum 287/91 provides insights into evolutionary and host adaptation pathways.</title>
        <authorList>
            <person name="Thomson N.R."/>
            <person name="Clayton D.J."/>
            <person name="Windhorst D."/>
            <person name="Vernikos G."/>
            <person name="Davidson S."/>
            <person name="Churcher C."/>
            <person name="Quail M.A."/>
            <person name="Stevens M."/>
            <person name="Jones M.A."/>
            <person name="Watson M."/>
            <person name="Barron A."/>
            <person name="Layton A."/>
            <person name="Pickard D."/>
            <person name="Kingsley R.A."/>
            <person name="Bignell A."/>
            <person name="Clark L."/>
            <person name="Harris B."/>
            <person name="Ormond D."/>
            <person name="Abdellah Z."/>
            <person name="Brooks K."/>
            <person name="Cherevach I."/>
            <person name="Chillingworth T."/>
            <person name="Woodward J."/>
            <person name="Norberczak H."/>
            <person name="Lord A."/>
            <person name="Arrowsmith C."/>
            <person name="Jagels K."/>
            <person name="Moule S."/>
            <person name="Mungall K."/>
            <person name="Saunders M."/>
            <person name="Whitehead S."/>
            <person name="Chabalgoity J.A."/>
            <person name="Maskell D."/>
            <person name="Humphreys T."/>
            <person name="Roberts M."/>
            <person name="Barrow P.A."/>
            <person name="Dougan G."/>
            <person name="Parkhill J."/>
        </authorList>
    </citation>
    <scope>NUCLEOTIDE SEQUENCE [LARGE SCALE GENOMIC DNA]</scope>
    <source>
        <strain>287/91 / NCTC 13346</strain>
    </source>
</reference>
<comment type="function">
    <text evidence="1">Activator of cell division through the inhibition of FtsZ GTPase activity, therefore promoting FtsZ assembly into bundles of protofilaments necessary for the formation of the division Z ring. It is recruited early at mid-cell but it is not essential for cell division.</text>
</comment>
<comment type="subunit">
    <text evidence="1">Homodimer. Interacts with FtsZ.</text>
</comment>
<comment type="subcellular location">
    <subcellularLocation>
        <location evidence="1">Cytoplasm</location>
    </subcellularLocation>
    <text evidence="1">Localizes at mid-cell.</text>
</comment>
<comment type="similarity">
    <text evidence="1">Belongs to the ZapA family. Type 1 subfamily.</text>
</comment>